<protein>
    <recommendedName>
        <fullName>3,4-dihydroxy-2-butanone 4-phosphate synthase</fullName>
        <shortName>DHBP synthase</shortName>
        <ecNumber>4.1.99.12</ecNumber>
    </recommendedName>
</protein>
<gene>
    <name type="primary">ribB</name>
    <name type="ordered locus">jhp_0740</name>
</gene>
<organism>
    <name type="scientific">Helicobacter pylori (strain J99 / ATCC 700824)</name>
    <name type="common">Campylobacter pylori J99</name>
    <dbReference type="NCBI Taxonomy" id="85963"/>
    <lineage>
        <taxon>Bacteria</taxon>
        <taxon>Pseudomonadati</taxon>
        <taxon>Campylobacterota</taxon>
        <taxon>Epsilonproteobacteria</taxon>
        <taxon>Campylobacterales</taxon>
        <taxon>Helicobacteraceae</taxon>
        <taxon>Helicobacter</taxon>
    </lineage>
</organism>
<feature type="chain" id="PRO_0000151803" description="3,4-dihydroxy-2-butanone 4-phosphate synthase">
    <location>
        <begin position="1"/>
        <end position="344"/>
    </location>
</feature>
<feature type="region of interest" description="DHBP synthase">
    <location>
        <begin position="1"/>
        <end position="202"/>
    </location>
</feature>
<feature type="region of interest" description="GTP cyclohydrolase II-like">
    <location>
        <begin position="203"/>
        <end position="344"/>
    </location>
</feature>
<feature type="binding site" evidence="1">
    <location>
        <begin position="27"/>
        <end position="28"/>
    </location>
    <ligand>
        <name>D-ribulose 5-phosphate</name>
        <dbReference type="ChEBI" id="CHEBI:58121"/>
    </ligand>
</feature>
<feature type="binding site" evidence="1">
    <location>
        <position position="28"/>
    </location>
    <ligand>
        <name>Mg(2+)</name>
        <dbReference type="ChEBI" id="CHEBI:18420"/>
        <label>1</label>
    </ligand>
</feature>
<feature type="binding site" evidence="1">
    <location>
        <position position="28"/>
    </location>
    <ligand>
        <name>Mg(2+)</name>
        <dbReference type="ChEBI" id="CHEBI:18420"/>
        <label>2</label>
    </ligand>
</feature>
<feature type="binding site" evidence="1">
    <location>
        <position position="32"/>
    </location>
    <ligand>
        <name>D-ribulose 5-phosphate</name>
        <dbReference type="ChEBI" id="CHEBI:58121"/>
    </ligand>
</feature>
<feature type="binding site" evidence="1">
    <location>
        <begin position="139"/>
        <end position="143"/>
    </location>
    <ligand>
        <name>D-ribulose 5-phosphate</name>
        <dbReference type="ChEBI" id="CHEBI:58121"/>
    </ligand>
</feature>
<feature type="binding site" evidence="1">
    <location>
        <position position="142"/>
    </location>
    <ligand>
        <name>Mg(2+)</name>
        <dbReference type="ChEBI" id="CHEBI:18420"/>
        <label>2</label>
    </ligand>
</feature>
<feature type="binding site" evidence="1">
    <location>
        <position position="163"/>
    </location>
    <ligand>
        <name>D-ribulose 5-phosphate</name>
        <dbReference type="ChEBI" id="CHEBI:58121"/>
    </ligand>
</feature>
<feature type="site" description="Essential for catalytic activity" evidence="1">
    <location>
        <position position="125"/>
    </location>
</feature>
<feature type="site" description="Essential for catalytic activity" evidence="1">
    <location>
        <position position="163"/>
    </location>
</feature>
<sequence length="344" mass="38891">MILRRVTEALEAYKNGEMLIVMDDEDRENEGDLVLAGIFSTPEKINFMATHARGLICVSLTKDLANKFELPPMVSVNDSNHETAFTVSIDAKEAKTGISAFERHLTIELLCKDTTKPSDFVRPGHIFPLIAKDGGVLARTGHTEASVDLCKLAGLKPVSVICEIMKEDGSMARRGDKFLSDFAIKHNLKTLYVSDLISYRLENESLLKMFCQEEREFLKHQTQCYTFLDHQQKNHYAFKFKGAKTHDLAPLVRFHPIKEDFDFLTTGAFEAFFKALEYLKREGGYLIFMNTHSEQNNIVKDFGIGALVLKNLGVKDFRLLSSCEDRQYKALSGFGLKLVETISL</sequence>
<comment type="function">
    <text evidence="1">Catalyzes the conversion of D-ribulose 5-phosphate to formate and 3,4-dihydroxy-2-butanone 4-phosphate.</text>
</comment>
<comment type="catalytic activity">
    <reaction>
        <text>D-ribulose 5-phosphate = (2S)-2-hydroxy-3-oxobutyl phosphate + formate + H(+)</text>
        <dbReference type="Rhea" id="RHEA:18457"/>
        <dbReference type="ChEBI" id="CHEBI:15378"/>
        <dbReference type="ChEBI" id="CHEBI:15740"/>
        <dbReference type="ChEBI" id="CHEBI:58121"/>
        <dbReference type="ChEBI" id="CHEBI:58830"/>
        <dbReference type="EC" id="4.1.99.12"/>
    </reaction>
</comment>
<comment type="cofactor">
    <cofactor evidence="1">
        <name>Mg(2+)</name>
        <dbReference type="ChEBI" id="CHEBI:18420"/>
    </cofactor>
    <cofactor evidence="1">
        <name>Mn(2+)</name>
        <dbReference type="ChEBI" id="CHEBI:29035"/>
    </cofactor>
    <text evidence="1">Binds 2 divalent metal cations per subunit. Magnesium or manganese.</text>
</comment>
<comment type="pathway">
    <text>Cofactor biosynthesis; riboflavin biosynthesis; 2-hydroxy-3-oxobutyl phosphate from D-ribulose 5-phosphate: step 1/1.</text>
</comment>
<comment type="similarity">
    <text evidence="2">In the N-terminal section; belongs to the DHBP synthase family.</text>
</comment>
<comment type="similarity">
    <text evidence="2">In the C-terminal section; belongs to the GTP cyclohydrolase II family.</text>
</comment>
<dbReference type="EC" id="4.1.99.12"/>
<dbReference type="EMBL" id="AE001439">
    <property type="protein sequence ID" value="AAD06312.1"/>
    <property type="molecule type" value="Genomic_DNA"/>
</dbReference>
<dbReference type="PIR" id="C71894">
    <property type="entry name" value="C71894"/>
</dbReference>
<dbReference type="RefSeq" id="WP_000603435.1">
    <property type="nucleotide sequence ID" value="NC_000921.1"/>
</dbReference>
<dbReference type="SMR" id="Q9ZL40"/>
<dbReference type="KEGG" id="hpj:jhp_0740"/>
<dbReference type="PATRIC" id="fig|85963.30.peg.236"/>
<dbReference type="eggNOG" id="COG0108">
    <property type="taxonomic scope" value="Bacteria"/>
</dbReference>
<dbReference type="eggNOG" id="COG0807">
    <property type="taxonomic scope" value="Bacteria"/>
</dbReference>
<dbReference type="UniPathway" id="UPA00275">
    <property type="reaction ID" value="UER00399"/>
</dbReference>
<dbReference type="Proteomes" id="UP000000804">
    <property type="component" value="Chromosome"/>
</dbReference>
<dbReference type="GO" id="GO:0005829">
    <property type="term" value="C:cytosol"/>
    <property type="evidence" value="ECO:0007669"/>
    <property type="project" value="TreeGrafter"/>
</dbReference>
<dbReference type="GO" id="GO:0008686">
    <property type="term" value="F:3,4-dihydroxy-2-butanone-4-phosphate synthase activity"/>
    <property type="evidence" value="ECO:0007669"/>
    <property type="project" value="UniProtKB-UniRule"/>
</dbReference>
<dbReference type="GO" id="GO:0003935">
    <property type="term" value="F:GTP cyclohydrolase II activity"/>
    <property type="evidence" value="ECO:0007669"/>
    <property type="project" value="TreeGrafter"/>
</dbReference>
<dbReference type="GO" id="GO:0000287">
    <property type="term" value="F:magnesium ion binding"/>
    <property type="evidence" value="ECO:0007669"/>
    <property type="project" value="UniProtKB-UniRule"/>
</dbReference>
<dbReference type="GO" id="GO:0030145">
    <property type="term" value="F:manganese ion binding"/>
    <property type="evidence" value="ECO:0007669"/>
    <property type="project" value="UniProtKB-UniRule"/>
</dbReference>
<dbReference type="GO" id="GO:0009231">
    <property type="term" value="P:riboflavin biosynthetic process"/>
    <property type="evidence" value="ECO:0007669"/>
    <property type="project" value="UniProtKB-UniRule"/>
</dbReference>
<dbReference type="FunFam" id="3.90.870.10:FF:000001">
    <property type="entry name" value="Riboflavin biosynthesis protein RibBA"/>
    <property type="match status" value="1"/>
</dbReference>
<dbReference type="Gene3D" id="3.90.870.10">
    <property type="entry name" value="DHBP synthase"/>
    <property type="match status" value="1"/>
</dbReference>
<dbReference type="Gene3D" id="3.40.50.10990">
    <property type="entry name" value="GTP cyclohydrolase II"/>
    <property type="match status" value="1"/>
</dbReference>
<dbReference type="HAMAP" id="MF_00180">
    <property type="entry name" value="RibB"/>
    <property type="match status" value="1"/>
</dbReference>
<dbReference type="InterPro" id="IPR017945">
    <property type="entry name" value="DHBP_synth_RibB-like_a/b_dom"/>
</dbReference>
<dbReference type="InterPro" id="IPR000422">
    <property type="entry name" value="DHBP_synthase_RibB"/>
</dbReference>
<dbReference type="InterPro" id="IPR032677">
    <property type="entry name" value="GTP_cyclohydro_II"/>
</dbReference>
<dbReference type="InterPro" id="IPR036144">
    <property type="entry name" value="RibA-like_sf"/>
</dbReference>
<dbReference type="NCBIfam" id="NF006804">
    <property type="entry name" value="PRK09314.1"/>
    <property type="match status" value="1"/>
</dbReference>
<dbReference type="NCBIfam" id="TIGR00506">
    <property type="entry name" value="ribB"/>
    <property type="match status" value="1"/>
</dbReference>
<dbReference type="PANTHER" id="PTHR21327:SF18">
    <property type="entry name" value="3,4-DIHYDROXY-2-BUTANONE 4-PHOSPHATE SYNTHASE"/>
    <property type="match status" value="1"/>
</dbReference>
<dbReference type="PANTHER" id="PTHR21327">
    <property type="entry name" value="GTP CYCLOHYDROLASE II-RELATED"/>
    <property type="match status" value="1"/>
</dbReference>
<dbReference type="Pfam" id="PF00926">
    <property type="entry name" value="DHBP_synthase"/>
    <property type="match status" value="1"/>
</dbReference>
<dbReference type="Pfam" id="PF00925">
    <property type="entry name" value="GTP_cyclohydro2"/>
    <property type="match status" value="1"/>
</dbReference>
<dbReference type="PIRSF" id="PIRSF001259">
    <property type="entry name" value="RibA"/>
    <property type="match status" value="1"/>
</dbReference>
<dbReference type="SUPFAM" id="SSF142695">
    <property type="entry name" value="RibA-like"/>
    <property type="match status" value="1"/>
</dbReference>
<dbReference type="SUPFAM" id="SSF55821">
    <property type="entry name" value="YrdC/RibB"/>
    <property type="match status" value="1"/>
</dbReference>
<proteinExistence type="inferred from homology"/>
<reference key="1">
    <citation type="journal article" date="1999" name="Nature">
        <title>Genomic sequence comparison of two unrelated isolates of the human gastric pathogen Helicobacter pylori.</title>
        <authorList>
            <person name="Alm R.A."/>
            <person name="Ling L.-S.L."/>
            <person name="Moir D.T."/>
            <person name="King B.L."/>
            <person name="Brown E.D."/>
            <person name="Doig P.C."/>
            <person name="Smith D.R."/>
            <person name="Noonan B."/>
            <person name="Guild B.C."/>
            <person name="deJonge B.L."/>
            <person name="Carmel G."/>
            <person name="Tummino P.J."/>
            <person name="Caruso A."/>
            <person name="Uria-Nickelsen M."/>
            <person name="Mills D.M."/>
            <person name="Ives C."/>
            <person name="Gibson R."/>
            <person name="Merberg D."/>
            <person name="Mills S.D."/>
            <person name="Jiang Q."/>
            <person name="Taylor D.E."/>
            <person name="Vovis G.F."/>
            <person name="Trust T.J."/>
        </authorList>
    </citation>
    <scope>NUCLEOTIDE SEQUENCE [LARGE SCALE GENOMIC DNA]</scope>
    <source>
        <strain>J99 / ATCC 700824</strain>
    </source>
</reference>
<accession>Q9ZL40</accession>
<keyword id="KW-0456">Lyase</keyword>
<keyword id="KW-0460">Magnesium</keyword>
<keyword id="KW-0464">Manganese</keyword>
<keyword id="KW-0479">Metal-binding</keyword>
<keyword id="KW-0686">Riboflavin biosynthesis</keyword>
<name>RIBB_HELPJ</name>
<evidence type="ECO:0000250" key="1"/>
<evidence type="ECO:0000305" key="2"/>